<protein>
    <recommendedName>
        <fullName>Phospho-cellobiase</fullName>
        <ecNumber>3.2.1.-</ecNumber>
    </recommendedName>
</protein>
<organism>
    <name type="scientific">Klebsiella oxytoca</name>
    <dbReference type="NCBI Taxonomy" id="571"/>
    <lineage>
        <taxon>Bacteria</taxon>
        <taxon>Pseudomonadati</taxon>
        <taxon>Pseudomonadota</taxon>
        <taxon>Gammaproteobacteria</taxon>
        <taxon>Enterobacterales</taxon>
        <taxon>Enterobacteriaceae</taxon>
        <taxon>Klebsiella/Raoultella group</taxon>
        <taxon>Klebsiella</taxon>
    </lineage>
</organism>
<proteinExistence type="inferred from homology"/>
<feature type="chain" id="PRO_0000063900" description="Phospho-cellobiase">
    <location>
        <begin position="1"/>
        <end position="464"/>
    </location>
</feature>
<feature type="active site" description="Proton donor" evidence="1">
    <location>
        <position position="172"/>
    </location>
</feature>
<feature type="active site" description="Nucleophile" evidence="2">
    <location>
        <position position="361"/>
    </location>
</feature>
<gene>
    <name type="primary">casB</name>
</gene>
<evidence type="ECO:0000255" key="1"/>
<evidence type="ECO:0000255" key="2">
    <source>
        <dbReference type="PROSITE-ProRule" id="PRU10055"/>
    </source>
</evidence>
<evidence type="ECO:0000305" key="3"/>
<keyword id="KW-0326">Glycosidase</keyword>
<keyword id="KW-0378">Hydrolase</keyword>
<reference key="1">
    <citation type="journal article" date="1997" name="Appl. Environ. Microbiol.">
        <title>Cloning of cellobiose phosphoenolpyruvate-dependent phosphotransferase genes: functional expression in recombinant Escherichia coli and identification of a putative binding region for disaccharides.</title>
        <authorList>
            <person name="Lai X."/>
            <person name="Davis F.C."/>
            <person name="Hespell R.B."/>
            <person name="Ingram L.O."/>
        </authorList>
    </citation>
    <scope>NUCLEOTIDE SEQUENCE [GENOMIC DNA]</scope>
    <source>
        <strain>P2</strain>
    </source>
</reference>
<dbReference type="EC" id="3.2.1.-"/>
<dbReference type="EMBL" id="U61727">
    <property type="protein sequence ID" value="AAB51564.1"/>
    <property type="molecule type" value="Genomic_DNA"/>
</dbReference>
<dbReference type="SMR" id="Q48409"/>
<dbReference type="STRING" id="571.AB185_16330"/>
<dbReference type="CAZy" id="GH1">
    <property type="family name" value="Glycoside Hydrolase Family 1"/>
</dbReference>
<dbReference type="PATRIC" id="fig|571.110.peg.4028"/>
<dbReference type="eggNOG" id="COG2723">
    <property type="taxonomic scope" value="Bacteria"/>
</dbReference>
<dbReference type="GO" id="GO:0005829">
    <property type="term" value="C:cytosol"/>
    <property type="evidence" value="ECO:0007669"/>
    <property type="project" value="TreeGrafter"/>
</dbReference>
<dbReference type="GO" id="GO:0008422">
    <property type="term" value="F:beta-glucosidase activity"/>
    <property type="evidence" value="ECO:0007669"/>
    <property type="project" value="TreeGrafter"/>
</dbReference>
<dbReference type="GO" id="GO:0016052">
    <property type="term" value="P:carbohydrate catabolic process"/>
    <property type="evidence" value="ECO:0007669"/>
    <property type="project" value="TreeGrafter"/>
</dbReference>
<dbReference type="FunFam" id="3.20.20.80:FF:000004">
    <property type="entry name" value="Beta-glucosidase 6-phospho-beta-glucosidase"/>
    <property type="match status" value="1"/>
</dbReference>
<dbReference type="Gene3D" id="3.20.20.80">
    <property type="entry name" value="Glycosidases"/>
    <property type="match status" value="1"/>
</dbReference>
<dbReference type="InterPro" id="IPR001360">
    <property type="entry name" value="Glyco_hydro_1"/>
</dbReference>
<dbReference type="InterPro" id="IPR018120">
    <property type="entry name" value="Glyco_hydro_1_AS"/>
</dbReference>
<dbReference type="InterPro" id="IPR033132">
    <property type="entry name" value="Glyco_hydro_1_N_CS"/>
</dbReference>
<dbReference type="InterPro" id="IPR017853">
    <property type="entry name" value="Glycoside_hydrolase_SF"/>
</dbReference>
<dbReference type="NCBIfam" id="NF007356">
    <property type="entry name" value="PRK09852.1"/>
    <property type="match status" value="1"/>
</dbReference>
<dbReference type="PANTHER" id="PTHR10353:SF122">
    <property type="entry name" value="6-PHOSPHO-BETA-GLUCOSIDASE ASCB-RELATED"/>
    <property type="match status" value="1"/>
</dbReference>
<dbReference type="PANTHER" id="PTHR10353">
    <property type="entry name" value="GLYCOSYL HYDROLASE"/>
    <property type="match status" value="1"/>
</dbReference>
<dbReference type="Pfam" id="PF00232">
    <property type="entry name" value="Glyco_hydro_1"/>
    <property type="match status" value="1"/>
</dbReference>
<dbReference type="PRINTS" id="PR00131">
    <property type="entry name" value="GLHYDRLASE1"/>
</dbReference>
<dbReference type="SUPFAM" id="SSF51445">
    <property type="entry name" value="(Trans)glycosidases"/>
    <property type="match status" value="1"/>
</dbReference>
<dbReference type="PROSITE" id="PS00572">
    <property type="entry name" value="GLYCOSYL_HYDROL_F1_1"/>
    <property type="match status" value="1"/>
</dbReference>
<dbReference type="PROSITE" id="PS00653">
    <property type="entry name" value="GLYCOSYL_HYDROL_F1_2"/>
    <property type="match status" value="1"/>
</dbReference>
<accession>Q48409</accession>
<name>CASB_KLEOX</name>
<comment type="similarity">
    <text evidence="3">Belongs to the glycosyl hydrolase 1 family.</text>
</comment>
<sequence length="464" mass="52242">MKTFPQAFLWGGATAANQVEGAYLEDGKGLTTSDVQPRGVFGDVVERVPGDSGIKDIAIDFYHRYPEDISLFAEMGFNCLRVSIAWARIFPHGDEAQPNEAGLAFYDKLFDEMAKHNITPLVTLSHYEMPWALVKNYGGWGNRKVIGFFERYARTVFERYQAKVKLWLTFNEINMSLHAPMTGVGLPADSSKAEVYQAIHHQLVASALAAKACHDIVPEGKIGNMLLGGLMYPLSCKPDDIFETLQQNRSWQFFGDVQCRGAYPGYMLRYFRDNGINLDITDADRAALKETVDFISFSYYMTGCVTADEELNKKARGNILSMVPNPHLASSEWGWQIDPLGLRTLLNVLWDRYQKPLFIVENGLGAKDKVEADGSINDDYRISYLNDHLVQVREAIEDGVELMGYTSWGPIDLVSASKAEMSKRYGFIYVDRDDDGNGTLARSRKKSFWWYKEVIATNGGSLKE</sequence>